<dbReference type="EMBL" id="CP000511">
    <property type="protein sequence ID" value="ABM14243.1"/>
    <property type="molecule type" value="Genomic_DNA"/>
</dbReference>
<dbReference type="RefSeq" id="WP_011780647.1">
    <property type="nucleotide sequence ID" value="NZ_JACKSD010000223.1"/>
</dbReference>
<dbReference type="SMR" id="A1TAP3"/>
<dbReference type="STRING" id="350058.Mvan_3448"/>
<dbReference type="MEROPS" id="T01.980"/>
<dbReference type="KEGG" id="mva:Mvan_3448"/>
<dbReference type="eggNOG" id="COG0638">
    <property type="taxonomic scope" value="Bacteria"/>
</dbReference>
<dbReference type="HOGENOM" id="CLU_071031_0_0_11"/>
<dbReference type="UniPathway" id="UPA00997"/>
<dbReference type="Proteomes" id="UP000009159">
    <property type="component" value="Chromosome"/>
</dbReference>
<dbReference type="GO" id="GO:0005737">
    <property type="term" value="C:cytoplasm"/>
    <property type="evidence" value="ECO:0007669"/>
    <property type="project" value="UniProtKB-SubCell"/>
</dbReference>
<dbReference type="GO" id="GO:0019773">
    <property type="term" value="C:proteasome core complex, alpha-subunit complex"/>
    <property type="evidence" value="ECO:0007669"/>
    <property type="project" value="UniProtKB-UniRule"/>
</dbReference>
<dbReference type="GO" id="GO:0004298">
    <property type="term" value="F:threonine-type endopeptidase activity"/>
    <property type="evidence" value="ECO:0007669"/>
    <property type="project" value="InterPro"/>
</dbReference>
<dbReference type="GO" id="GO:0019941">
    <property type="term" value="P:modification-dependent protein catabolic process"/>
    <property type="evidence" value="ECO:0007669"/>
    <property type="project" value="UniProtKB-UniRule"/>
</dbReference>
<dbReference type="GO" id="GO:0010498">
    <property type="term" value="P:proteasomal protein catabolic process"/>
    <property type="evidence" value="ECO:0007669"/>
    <property type="project" value="UniProtKB-UniRule"/>
</dbReference>
<dbReference type="CDD" id="cd01906">
    <property type="entry name" value="proteasome_protease_HslV"/>
    <property type="match status" value="1"/>
</dbReference>
<dbReference type="FunFam" id="3.60.20.10:FF:000023">
    <property type="entry name" value="Proteasome subunit alpha"/>
    <property type="match status" value="1"/>
</dbReference>
<dbReference type="Gene3D" id="3.60.20.10">
    <property type="entry name" value="Glutamine Phosphoribosylpyrophosphate, subunit 1, domain 1"/>
    <property type="match status" value="1"/>
</dbReference>
<dbReference type="HAMAP" id="MF_00289_B">
    <property type="entry name" value="Proteasome_A_B"/>
    <property type="match status" value="1"/>
</dbReference>
<dbReference type="InterPro" id="IPR029055">
    <property type="entry name" value="Ntn_hydrolases_N"/>
</dbReference>
<dbReference type="InterPro" id="IPR050115">
    <property type="entry name" value="Proteasome_alpha"/>
</dbReference>
<dbReference type="InterPro" id="IPR023332">
    <property type="entry name" value="Proteasome_alpha-type"/>
</dbReference>
<dbReference type="InterPro" id="IPR022296">
    <property type="entry name" value="Proteasome_asu_bac"/>
</dbReference>
<dbReference type="InterPro" id="IPR001353">
    <property type="entry name" value="Proteasome_sua/b"/>
</dbReference>
<dbReference type="NCBIfam" id="TIGR03691">
    <property type="entry name" value="20S_bact_alpha"/>
    <property type="match status" value="1"/>
</dbReference>
<dbReference type="PANTHER" id="PTHR11599">
    <property type="entry name" value="PROTEASOME SUBUNIT ALPHA/BETA"/>
    <property type="match status" value="1"/>
</dbReference>
<dbReference type="Pfam" id="PF00227">
    <property type="entry name" value="Proteasome"/>
    <property type="match status" value="1"/>
</dbReference>
<dbReference type="SUPFAM" id="SSF56235">
    <property type="entry name" value="N-terminal nucleophile aminohydrolases (Ntn hydrolases)"/>
    <property type="match status" value="1"/>
</dbReference>
<dbReference type="PROSITE" id="PS51475">
    <property type="entry name" value="PROTEASOME_ALPHA_2"/>
    <property type="match status" value="1"/>
</dbReference>
<gene>
    <name evidence="1" type="primary">prcA</name>
    <name type="ordered locus">Mvan_3448</name>
</gene>
<evidence type="ECO:0000255" key="1">
    <source>
        <dbReference type="HAMAP-Rule" id="MF_00289"/>
    </source>
</evidence>
<evidence type="ECO:0000256" key="2">
    <source>
        <dbReference type="SAM" id="MobiDB-lite"/>
    </source>
</evidence>
<organism>
    <name type="scientific">Mycolicibacterium vanbaalenii (strain DSM 7251 / JCM 13017 / BCRC 16820 / KCTC 9966 / NRRL B-24157 / PYR-1)</name>
    <name type="common">Mycobacterium vanbaalenii</name>
    <dbReference type="NCBI Taxonomy" id="350058"/>
    <lineage>
        <taxon>Bacteria</taxon>
        <taxon>Bacillati</taxon>
        <taxon>Actinomycetota</taxon>
        <taxon>Actinomycetes</taxon>
        <taxon>Mycobacteriales</taxon>
        <taxon>Mycobacteriaceae</taxon>
        <taxon>Mycolicibacterium</taxon>
    </lineage>
</organism>
<name>PSA_MYCVP</name>
<feature type="chain" id="PRO_0000397162" description="Proteasome subunit alpha">
    <location>
        <begin position="1"/>
        <end position="254"/>
    </location>
</feature>
<feature type="region of interest" description="Disordered" evidence="2">
    <location>
        <begin position="232"/>
        <end position="254"/>
    </location>
</feature>
<comment type="function">
    <text evidence="1">Component of the proteasome core, a large protease complex with broad specificity involved in protein degradation.</text>
</comment>
<comment type="activity regulation">
    <text evidence="1">The formation of the proteasomal ATPase ARC-20S proteasome complex, likely via the docking of the C-termini of ARC into the intersubunit pockets in the alpha-rings, may trigger opening of the gate for substrate entry. Interconversion between the open-gate and close-gate conformations leads to a dynamic regulation of the 20S proteasome proteolysis activity.</text>
</comment>
<comment type="pathway">
    <text evidence="1">Protein degradation; proteasomal Pup-dependent pathway.</text>
</comment>
<comment type="subunit">
    <text evidence="1">The 20S proteasome core is composed of 14 alpha and 14 beta subunits that assemble into four stacked heptameric rings, resulting in a barrel-shaped structure. The two inner rings, each composed of seven catalytic beta subunits, are sandwiched by two outer rings, each composed of seven alpha subunits. The catalytic chamber with the active sites is on the inside of the barrel. Has a gated structure, the ends of the cylinder being occluded by the N-termini of the alpha-subunits. Is capped by the proteasome-associated ATPase, ARC.</text>
</comment>
<comment type="subcellular location">
    <subcellularLocation>
        <location evidence="1">Cytoplasm</location>
    </subcellularLocation>
</comment>
<comment type="similarity">
    <text evidence="1">Belongs to the peptidase T1A family.</text>
</comment>
<keyword id="KW-0963">Cytoplasm</keyword>
<keyword id="KW-0647">Proteasome</keyword>
<protein>
    <recommendedName>
        <fullName evidence="1">Proteasome subunit alpha</fullName>
    </recommendedName>
    <alternativeName>
        <fullName evidence="1">20S proteasome alpha subunit</fullName>
    </alternativeName>
    <alternativeName>
        <fullName evidence="1">Proteasome core protein PrcA</fullName>
    </alternativeName>
</protein>
<accession>A1TAP3</accession>
<proteinExistence type="inferred from homology"/>
<reference key="1">
    <citation type="submission" date="2006-12" db="EMBL/GenBank/DDBJ databases">
        <title>Complete sequence of Mycobacterium vanbaalenii PYR-1.</title>
        <authorList>
            <consortium name="US DOE Joint Genome Institute"/>
            <person name="Copeland A."/>
            <person name="Lucas S."/>
            <person name="Lapidus A."/>
            <person name="Barry K."/>
            <person name="Detter J.C."/>
            <person name="Glavina del Rio T."/>
            <person name="Hammon N."/>
            <person name="Israni S."/>
            <person name="Dalin E."/>
            <person name="Tice H."/>
            <person name="Pitluck S."/>
            <person name="Singan V."/>
            <person name="Schmutz J."/>
            <person name="Larimer F."/>
            <person name="Land M."/>
            <person name="Hauser L."/>
            <person name="Kyrpides N."/>
            <person name="Anderson I.J."/>
            <person name="Miller C."/>
            <person name="Richardson P."/>
        </authorList>
    </citation>
    <scope>NUCLEOTIDE SEQUENCE [LARGE SCALE GENOMIC DNA]</scope>
    <source>
        <strain>DSM 7251 / JCM 13017 / BCRC 16820 / KCTC 9966 / NRRL B-24157 / PYR-1</strain>
    </source>
</reference>
<sequence>MSFPYFISPEQAMRERSELARKGIARGRSVIALAYADGVLFVAENPSRSLQKVSELYDRIGFAAVGRFNEFNNLRSGGIRFADTQGYAYSRRDVTGRQLANVYAQTLGTIFTEQAKPYEVELCVAEVAHHGETKAPELYRITYDGSIADEPHFVVMGGTTEPISTALNESYKENLSLADAVSIAVKALGAGVNGAEPRTLGPATLEVAVLDANRPRRAFRRITGSALEALLPEVDSSESSNEAEAGAEKGSGES</sequence>